<comment type="function">
    <text evidence="1">This protein specifically catalyzes the removal of signal peptides from prolipoproteins.</text>
</comment>
<comment type="catalytic activity">
    <reaction evidence="1">
        <text>Release of signal peptides from bacterial membrane prolipoproteins. Hydrolyzes -Xaa-Yaa-Zaa-|-(S,diacylglyceryl)Cys-, in which Xaa is hydrophobic (preferably Leu), and Yaa (Ala or Ser) and Zaa (Gly or Ala) have small, neutral side chains.</text>
        <dbReference type="EC" id="3.4.23.36"/>
    </reaction>
</comment>
<comment type="pathway">
    <text evidence="1">Protein modification; lipoprotein biosynthesis (signal peptide cleavage).</text>
</comment>
<comment type="subcellular location">
    <subcellularLocation>
        <location evidence="1">Cell inner membrane</location>
        <topology evidence="1">Multi-pass membrane protein</topology>
    </subcellularLocation>
</comment>
<comment type="similarity">
    <text evidence="1">Belongs to the peptidase A8 family.</text>
</comment>
<gene>
    <name evidence="1" type="primary">lspA</name>
    <name type="ordered locus">CJJ81176_0384</name>
</gene>
<feature type="chain" id="PRO_1000097244" description="Lipoprotein signal peptidase">
    <location>
        <begin position="1"/>
        <end position="156"/>
    </location>
</feature>
<feature type="transmembrane region" description="Helical" evidence="1">
    <location>
        <begin position="5"/>
        <end position="25"/>
    </location>
</feature>
<feature type="transmembrane region" description="Helical" evidence="1">
    <location>
        <begin position="64"/>
        <end position="84"/>
    </location>
</feature>
<feature type="transmembrane region" description="Helical" evidence="1">
    <location>
        <begin position="89"/>
        <end position="109"/>
    </location>
</feature>
<feature type="transmembrane region" description="Helical" evidence="1">
    <location>
        <begin position="122"/>
        <end position="142"/>
    </location>
</feature>
<feature type="active site" evidence="1">
    <location>
        <position position="113"/>
    </location>
</feature>
<feature type="active site" evidence="1">
    <location>
        <position position="130"/>
    </location>
</feature>
<dbReference type="EC" id="3.4.23.36" evidence="1"/>
<dbReference type="EMBL" id="CP000538">
    <property type="protein sequence ID" value="EAQ73308.1"/>
    <property type="molecule type" value="Genomic_DNA"/>
</dbReference>
<dbReference type="RefSeq" id="WP_002857354.1">
    <property type="nucleotide sequence ID" value="NC_008787.1"/>
</dbReference>
<dbReference type="SMR" id="A1VY81"/>
<dbReference type="KEGG" id="cjj:CJJ81176_0384"/>
<dbReference type="eggNOG" id="COG0597">
    <property type="taxonomic scope" value="Bacteria"/>
</dbReference>
<dbReference type="HOGENOM" id="CLU_083252_4_3_7"/>
<dbReference type="UniPathway" id="UPA00665"/>
<dbReference type="Proteomes" id="UP000000646">
    <property type="component" value="Chromosome"/>
</dbReference>
<dbReference type="GO" id="GO:0005886">
    <property type="term" value="C:plasma membrane"/>
    <property type="evidence" value="ECO:0007669"/>
    <property type="project" value="UniProtKB-SubCell"/>
</dbReference>
<dbReference type="GO" id="GO:0004190">
    <property type="term" value="F:aspartic-type endopeptidase activity"/>
    <property type="evidence" value="ECO:0007669"/>
    <property type="project" value="UniProtKB-UniRule"/>
</dbReference>
<dbReference type="GO" id="GO:0006508">
    <property type="term" value="P:proteolysis"/>
    <property type="evidence" value="ECO:0007669"/>
    <property type="project" value="UniProtKB-KW"/>
</dbReference>
<dbReference type="HAMAP" id="MF_00161">
    <property type="entry name" value="LspA"/>
    <property type="match status" value="1"/>
</dbReference>
<dbReference type="InterPro" id="IPR001872">
    <property type="entry name" value="Peptidase_A8"/>
</dbReference>
<dbReference type="NCBIfam" id="TIGR00077">
    <property type="entry name" value="lspA"/>
    <property type="match status" value="1"/>
</dbReference>
<dbReference type="PANTHER" id="PTHR33695">
    <property type="entry name" value="LIPOPROTEIN SIGNAL PEPTIDASE"/>
    <property type="match status" value="1"/>
</dbReference>
<dbReference type="PANTHER" id="PTHR33695:SF1">
    <property type="entry name" value="LIPOPROTEIN SIGNAL PEPTIDASE"/>
    <property type="match status" value="1"/>
</dbReference>
<dbReference type="Pfam" id="PF01252">
    <property type="entry name" value="Peptidase_A8"/>
    <property type="match status" value="1"/>
</dbReference>
<dbReference type="PRINTS" id="PR00781">
    <property type="entry name" value="LIPOSIGPTASE"/>
</dbReference>
<dbReference type="PROSITE" id="PS00855">
    <property type="entry name" value="SPASE_II"/>
    <property type="match status" value="1"/>
</dbReference>
<accession>A1VY81</accession>
<reference key="1">
    <citation type="submission" date="2006-12" db="EMBL/GenBank/DDBJ databases">
        <authorList>
            <person name="Fouts D.E."/>
            <person name="Nelson K.E."/>
            <person name="Sebastian Y."/>
        </authorList>
    </citation>
    <scope>NUCLEOTIDE SEQUENCE [LARGE SCALE GENOMIC DNA]</scope>
    <source>
        <strain>81-176</strain>
    </source>
</reference>
<evidence type="ECO:0000255" key="1">
    <source>
        <dbReference type="HAMAP-Rule" id="MF_00161"/>
    </source>
</evidence>
<proteinExistence type="inferred from homology"/>
<keyword id="KW-0064">Aspartyl protease</keyword>
<keyword id="KW-0997">Cell inner membrane</keyword>
<keyword id="KW-1003">Cell membrane</keyword>
<keyword id="KW-0378">Hydrolase</keyword>
<keyword id="KW-0472">Membrane</keyword>
<keyword id="KW-0645">Protease</keyword>
<keyword id="KW-0812">Transmembrane</keyword>
<keyword id="KW-1133">Transmembrane helix</keyword>
<sequence length="156" mass="18307">MAKTFKFIFYFWGAFVLVFALDQWVKSLTLAGLRWQSEYLDLTYALNTGVAFSMLSFLEHNLKYLHLALIVVLFIYLFWQKTLLKTHSIAFGMMLGAGVSNLLDRFIHGGVVDMFFWHKWFNFAIFNVADVMINISVALILIQEIFKKRKKDDRMD</sequence>
<name>LSPA_CAMJJ</name>
<protein>
    <recommendedName>
        <fullName evidence="1">Lipoprotein signal peptidase</fullName>
        <ecNumber evidence="1">3.4.23.36</ecNumber>
    </recommendedName>
    <alternativeName>
        <fullName evidence="1">Prolipoprotein signal peptidase</fullName>
    </alternativeName>
    <alternativeName>
        <fullName evidence="1">Signal peptidase II</fullName>
        <shortName evidence="1">SPase II</shortName>
    </alternativeName>
</protein>
<organism>
    <name type="scientific">Campylobacter jejuni subsp. jejuni serotype O:23/36 (strain 81-176)</name>
    <dbReference type="NCBI Taxonomy" id="354242"/>
    <lineage>
        <taxon>Bacteria</taxon>
        <taxon>Pseudomonadati</taxon>
        <taxon>Campylobacterota</taxon>
        <taxon>Epsilonproteobacteria</taxon>
        <taxon>Campylobacterales</taxon>
        <taxon>Campylobacteraceae</taxon>
        <taxon>Campylobacter</taxon>
    </lineage>
</organism>